<keyword id="KW-0014">AIDS</keyword>
<keyword id="KW-1032">Host cell membrane</keyword>
<keyword id="KW-1035">Host cytoplasm</keyword>
<keyword id="KW-1043">Host membrane</keyword>
<keyword id="KW-0945">Host-virus interaction</keyword>
<keyword id="KW-0472">Membrane</keyword>
<keyword id="KW-0479">Metal-binding</keyword>
<keyword id="KW-0597">Phosphoprotein</keyword>
<keyword id="KW-0694">RNA-binding</keyword>
<keyword id="KW-0832">Ubl conjugation</keyword>
<keyword id="KW-0833">Ubl conjugation pathway</keyword>
<keyword id="KW-0946">Virion</keyword>
<keyword id="KW-0862">Zinc</keyword>
<accession>P35964</accession>
<organismHost>
    <name type="scientific">Homo sapiens</name>
    <name type="common">Human</name>
    <dbReference type="NCBI Taxonomy" id="9606"/>
</organismHost>
<comment type="function">
    <text evidence="2">Counteracts the innate antiviral activity of host APOBEC3F and APOBEC3G by promoting their ubiquitination and degradation. Acts as a substrate recognition component of an E3 ubiquitin-protein ligase complex: mechanistically, Vif hijacks a host cullin-5-RING E3 ubiquitin-protein ligase complex (ECS complex) and the transcription coactivator CBFB/CBF-beta to form an active E3 ubiquitin-protein ligase complex that targets APOBEC3G and APOBEC3F for polyubiquitination, leading to their degradation by the proteasome. Vif interaction with APOBEC3G also blocks its cytidine deaminase activity in a proteasome-independent manner, suggesting a dual inhibitory mechanism. May interact directly with APOBEC3G mRNA in order to inhibit its translation. Association with CBFB/CBF-beta also inhibits the transcription coactivator activity of CBFB/CBF-beta. Seems to play a role in viral morphology by affecting the stability of the viral nucleoprotein core. Finally, Vif also contributes to the G2 cell cycle arrest observed in HIV infected cells.</text>
</comment>
<comment type="subunit">
    <text evidence="1">Homomultimer; in vitro and presumably in vivo. Interacts with viral RNA and Pr55Gag precursor; these interactions mediate Vif incorporation into the virion. Interacts with the viral reverse transcriptase. Forms cullin-5-RING E3 ubiquitin-protein ligase complex (ECS complex) by interacting with host CUL5, RBX2, elongin BC complex (ELOB and ELOC) and CBFB/CBF-beta. Within the ECS complex, Vif interacts directly with host CUL5, ELOC and APOBEC (APOBEC3F and APOBEC3G) substrates. The ECS complex also contains some single-stranded RNA (ssRNA) that acts as a glue that bridges Vif with APOBEC (APOBEC3F and APOBEC3G) substrates. Interacts with host UBCE7IP1 isoform 3/ZIN and possibly with SAT. Interacts with host tyrosine kinases HCK and FYN; these interactions may decrease level of phosphorylated APOBEC3G incorporation into virions. Interacts with host ABCE1; this interaction may play a role in protecting viral RNA from damage during viral assembly. Interacts with host MDM2; this interaction targets Vif for degradation by the proteasome.</text>
</comment>
<comment type="subcellular location">
    <subcellularLocation>
        <location evidence="2">Host cytoplasm</location>
    </subcellularLocation>
    <subcellularLocation>
        <location evidence="2">Host cell membrane</location>
        <topology evidence="2">Peripheral membrane protein</topology>
        <orientation evidence="2">Cytoplasmic side</orientation>
    </subcellularLocation>
    <subcellularLocation>
        <location evidence="2">Virion</location>
    </subcellularLocation>
    <text evidence="2">In the cytoplasm, seems to colocalize with intermediate filament vimentin. A fraction is associated with the cytoplasmic side of cellular membranes, presumably via the interaction with Pr55Gag precursor. Incorporated in virions at a ratio of approximately 7 to 20 molecules per virion.</text>
</comment>
<comment type="induction">
    <text evidence="2">Expressed late during infection in a Rev-dependent manner.</text>
</comment>
<comment type="domain">
    <text evidence="2">The BC-like-box motif mediates the interaction with elongin BC complex.</text>
</comment>
<comment type="domain">
    <text evidence="2">The HCCH motif (H-x(5)-C-x(18)-C-x(5)-H) mediates the interaction with CUL5.</text>
</comment>
<comment type="PTM">
    <text evidence="2">Processed in virion by the viral protease.</text>
</comment>
<comment type="PTM">
    <text evidence="2">Highly phosphorylated on serine and threonine residues.</text>
</comment>
<comment type="PTM">
    <text evidence="2">Polyubiquitinated and degraded by the proteasome in the presence of APOBEC3G.</text>
</comment>
<comment type="miscellaneous">
    <text evidence="2">Vif-defective viruses show catastrophic failure in reverse transcription due to APOBEC-induced mutations that initiate a DNA base repair pathway and compromise the structural integrity of the ssDNA. In the absence of Vif, the virion is morphologically abnormal.</text>
</comment>
<comment type="miscellaneous">
    <text evidence="2">HIV-1 lineages are divided in three main groups, M (for Major), O (for Outlier), and N (for New, or Non-M, Non-O). The vast majority of strains found worldwide belong to the group M. Group O seems to be endemic to and largely confined to Cameroon and neighboring countries in West Central Africa, where these viruses represent a small minority of HIV-1 strains. The group N is represented by a limited number of isolates from Cameroonian persons. The group M is further subdivided in 9 clades or subtypes (A to D, F to H, J and K).</text>
</comment>
<comment type="miscellaneous">
    <text evidence="2">Required for replication in 'nonpermissive' cells, including primary T-cells, macrophages and certain T-cell lines, but is dispensable for replication in 'permissive' cell lines, such as 293T cells. In nonpermissive cells, Vif-defective viruses can produce virions, but they fail to complete reverse transcription and cannot successfully infect new cells.</text>
</comment>
<comment type="similarity">
    <text evidence="2">Belongs to the primate lentivirus group Vif protein family.</text>
</comment>
<dbReference type="EMBL" id="M93258">
    <property type="status" value="NOT_ANNOTATED_CDS"/>
    <property type="molecule type" value="Genomic_RNA"/>
</dbReference>
<dbReference type="PIR" id="C44001">
    <property type="entry name" value="C44001"/>
</dbReference>
<dbReference type="SMR" id="P35964"/>
<dbReference type="Proteomes" id="UP000007419">
    <property type="component" value="Genome"/>
</dbReference>
<dbReference type="GO" id="GO:0030430">
    <property type="term" value="C:host cell cytoplasm"/>
    <property type="evidence" value="ECO:0007669"/>
    <property type="project" value="UniProtKB-SubCell"/>
</dbReference>
<dbReference type="GO" id="GO:0020002">
    <property type="term" value="C:host cell plasma membrane"/>
    <property type="evidence" value="ECO:0007669"/>
    <property type="project" value="UniProtKB-SubCell"/>
</dbReference>
<dbReference type="GO" id="GO:0016020">
    <property type="term" value="C:membrane"/>
    <property type="evidence" value="ECO:0007669"/>
    <property type="project" value="UniProtKB-UniRule"/>
</dbReference>
<dbReference type="GO" id="GO:0044423">
    <property type="term" value="C:virion component"/>
    <property type="evidence" value="ECO:0007669"/>
    <property type="project" value="UniProtKB-UniRule"/>
</dbReference>
<dbReference type="GO" id="GO:0046872">
    <property type="term" value="F:metal ion binding"/>
    <property type="evidence" value="ECO:0007669"/>
    <property type="project" value="UniProtKB-KW"/>
</dbReference>
<dbReference type="GO" id="GO:0003723">
    <property type="term" value="F:RNA binding"/>
    <property type="evidence" value="ECO:0007669"/>
    <property type="project" value="UniProtKB-UniRule"/>
</dbReference>
<dbReference type="GO" id="GO:0019058">
    <property type="term" value="P:viral life cycle"/>
    <property type="evidence" value="ECO:0007669"/>
    <property type="project" value="InterPro"/>
</dbReference>
<dbReference type="HAMAP" id="MF_04081">
    <property type="entry name" value="HIV_VIF"/>
    <property type="match status" value="1"/>
</dbReference>
<dbReference type="InterPro" id="IPR000475">
    <property type="entry name" value="Vif"/>
</dbReference>
<dbReference type="Pfam" id="PF00559">
    <property type="entry name" value="Vif"/>
    <property type="match status" value="1"/>
</dbReference>
<dbReference type="PRINTS" id="PR00349">
    <property type="entry name" value="VIRIONINFFCT"/>
</dbReference>
<feature type="chain" id="PRO_0000043038" description="Virion infectivity factor" evidence="2">
    <location>
        <begin position="1"/>
        <end position="192"/>
    </location>
</feature>
<feature type="chain" id="PRO_0000043039" description="p17" evidence="2">
    <location>
        <begin position="1"/>
        <end position="150"/>
    </location>
</feature>
<feature type="chain" id="PRO_0000043040" description="p7" evidence="2">
    <location>
        <begin position="151"/>
        <end position="192"/>
    </location>
</feature>
<feature type="region of interest" description="Interaction with host APOBEC3F; F1-box" evidence="2">
    <location>
        <begin position="14"/>
        <end position="17"/>
    </location>
</feature>
<feature type="region of interest" description="Interaction with host APOBEC3G; G-box" evidence="2">
    <location>
        <begin position="40"/>
        <end position="44"/>
    </location>
</feature>
<feature type="region of interest" description="Interaction with host APOBEC3F and APOBEC3G; FG-box" evidence="2">
    <location>
        <begin position="54"/>
        <end position="72"/>
    </location>
</feature>
<feature type="region of interest" description="Interaction with host APOBEC3F; F2-box" evidence="2">
    <location>
        <begin position="74"/>
        <end position="79"/>
    </location>
</feature>
<feature type="region of interest" description="RNA-binding" evidence="2">
    <location>
        <begin position="75"/>
        <end position="114"/>
    </location>
</feature>
<feature type="region of interest" description="SOCS box-like" evidence="2">
    <location>
        <begin position="151"/>
        <end position="180"/>
    </location>
</feature>
<feature type="region of interest" description="Multimerization" evidence="2">
    <location>
        <begin position="151"/>
        <end position="164"/>
    </location>
</feature>
<feature type="region of interest" description="Disordered" evidence="3">
    <location>
        <begin position="159"/>
        <end position="192"/>
    </location>
</feature>
<feature type="region of interest" description="Membrane association" evidence="2">
    <location>
        <begin position="171"/>
        <end position="172"/>
    </location>
</feature>
<feature type="short sequence motif" description="HCCH motif" evidence="2">
    <location>
        <begin position="108"/>
        <end position="139"/>
    </location>
</feature>
<feature type="short sequence motif" description="BC-box-like motif" evidence="2">
    <location>
        <begin position="144"/>
        <end position="153"/>
    </location>
</feature>
<feature type="compositionally biased region" description="Basic residues" evidence="3">
    <location>
        <begin position="176"/>
        <end position="186"/>
    </location>
</feature>
<feature type="binding site" evidence="2">
    <location>
        <position position="108"/>
    </location>
    <ligand>
        <name>Zn(2+)</name>
        <dbReference type="ChEBI" id="CHEBI:29105"/>
    </ligand>
</feature>
<feature type="binding site" evidence="2">
    <location>
        <position position="114"/>
    </location>
    <ligand>
        <name>Zn(2+)</name>
        <dbReference type="ChEBI" id="CHEBI:29105"/>
    </ligand>
</feature>
<feature type="binding site" evidence="2">
    <location>
        <position position="133"/>
    </location>
    <ligand>
        <name>Zn(2+)</name>
        <dbReference type="ChEBI" id="CHEBI:29105"/>
    </ligand>
</feature>
<feature type="binding site" evidence="2">
    <location>
        <position position="139"/>
    </location>
    <ligand>
        <name>Zn(2+)</name>
        <dbReference type="ChEBI" id="CHEBI:29105"/>
    </ligand>
</feature>
<feature type="site" description="Cleavage in virion (by viral protease)" evidence="2">
    <location>
        <begin position="150"/>
        <end position="151"/>
    </location>
</feature>
<feature type="modified residue" description="Phosphothreonine; by host MAP4K1" evidence="2">
    <location>
        <position position="96"/>
    </location>
</feature>
<feature type="modified residue" description="Phosphoserine; by host" evidence="2">
    <location>
        <position position="144"/>
    </location>
</feature>
<feature type="modified residue" description="Phosphothreonine; by host" evidence="2">
    <location>
        <position position="155"/>
    </location>
</feature>
<feature type="modified residue" description="Phosphoserine; by host MAP4K1" evidence="2">
    <location>
        <position position="165"/>
    </location>
</feature>
<feature type="modified residue" description="Phosphothreonine; by host" evidence="2">
    <location>
        <position position="188"/>
    </location>
</feature>
<evidence type="ECO:0000250" key="1">
    <source>
        <dbReference type="UniProtKB" id="O70897"/>
    </source>
</evidence>
<evidence type="ECO:0000255" key="2">
    <source>
        <dbReference type="HAMAP-Rule" id="MF_04081"/>
    </source>
</evidence>
<evidence type="ECO:0000256" key="3">
    <source>
        <dbReference type="SAM" id="MobiDB-lite"/>
    </source>
</evidence>
<name>VIF_HV1Y2</name>
<gene>
    <name evidence="2" type="primary">vif</name>
</gene>
<reference key="1">
    <citation type="journal article" date="1992" name="J. Virol.">
        <title>Complete nucleotide sequence, genome organization, and biological properties of human immunodeficiency virus type 1 in vivo: evidence for limited defectiveness and complementation.</title>
        <authorList>
            <person name="Li Y."/>
            <person name="Hui H."/>
            <person name="Burgess C.J."/>
            <person name="Price R.W."/>
            <person name="Sharp P.M."/>
            <person name="Hahn B.H."/>
            <person name="Shaw G.M."/>
        </authorList>
    </citation>
    <scope>NUCLEOTIDE SEQUENCE [GENOMIC RNA]</scope>
</reference>
<reference key="2">
    <citation type="journal article" date="2004" name="Trends Mol. Med.">
        <title>The viral infectivity factor (Vif) of HIV-1 unveiled.</title>
        <authorList>
            <person name="Rose K.M."/>
            <person name="Marin M."/>
            <person name="Kozak S.L."/>
            <person name="Kabat D."/>
        </authorList>
    </citation>
    <scope>REVIEW</scope>
</reference>
<sequence>MENRWQVMIVWQVDRMRIRAWKSLVKHHMYISGKARGWFYRHHYESPHPRISSEVHIPLGDAKLVITTYWGLHTGERDWHLGQGVSIEWRKKRYSTQVDPDLADQLIHLYYFDCFSESAIRKAILGYRVSPRCEYQAGHNKVGSLQYLALTALITPKKTKPPLPSVKKLTEDRWNKPQKTKGHRGSRTMNGH</sequence>
<proteinExistence type="inferred from homology"/>
<protein>
    <recommendedName>
        <fullName evidence="2">Virion infectivity factor</fullName>
        <shortName evidence="2">Vif</shortName>
    </recommendedName>
    <alternativeName>
        <fullName evidence="2">SOR protein</fullName>
    </alternativeName>
    <component>
        <recommendedName>
            <fullName evidence="2">p17</fullName>
        </recommendedName>
    </component>
    <component>
        <recommendedName>
            <fullName evidence="2">p7</fullName>
        </recommendedName>
    </component>
</protein>
<organism>
    <name type="scientific">Human immunodeficiency virus type 1 group M subtype B (isolate YU-2)</name>
    <name type="common">HIV-1</name>
    <dbReference type="NCBI Taxonomy" id="362651"/>
    <lineage>
        <taxon>Viruses</taxon>
        <taxon>Riboviria</taxon>
        <taxon>Pararnavirae</taxon>
        <taxon>Artverviricota</taxon>
        <taxon>Revtraviricetes</taxon>
        <taxon>Ortervirales</taxon>
        <taxon>Retroviridae</taxon>
        <taxon>Orthoretrovirinae</taxon>
        <taxon>Lentivirus</taxon>
        <taxon>Human immunodeficiency virus type 1</taxon>
    </lineage>
</organism>